<name>ATP6_ALLAR</name>
<evidence type="ECO:0000255" key="1"/>
<evidence type="ECO:0000305" key="2"/>
<protein>
    <recommendedName>
        <fullName>ATP synthase subunit a</fullName>
    </recommendedName>
    <alternativeName>
        <fullName>F-ATPase protein 6</fullName>
    </alternativeName>
</protein>
<comment type="function">
    <text>Mitochondrial membrane ATP synthase (F(1)F(0) ATP synthase or Complex V) produces ATP from ADP in the presence of a proton gradient across the membrane which is generated by electron transport complexes of the respiratory chain. F-type ATPases consist of two structural domains, F(1) - containing the extramembraneous catalytic core and F(0) - containing the membrane proton channel, linked together by a central stalk and a peripheral stalk. During catalysis, ATP synthesis in the catalytic domain of F(1) is coupled via a rotary mechanism of the central stalk subunits to proton translocation. Key component of the proton channel; it may play a direct role in the translocation of protons across the membrane.</text>
</comment>
<comment type="subunit">
    <text>F-type ATPases have 2 components, CF(1) - the catalytic core - and CF(0) - the membrane proton channel. CF(1) has five subunits: alpha(3), beta(3), gamma(1), delta(1), epsilon(1). CF(0) has three main subunits: a, b and c.</text>
</comment>
<comment type="subcellular location">
    <subcellularLocation>
        <location>Mitochondrion inner membrane</location>
        <topology>Multi-pass membrane protein</topology>
    </subcellularLocation>
</comment>
<comment type="similarity">
    <text evidence="2">Belongs to the ATPase A chain family.</text>
</comment>
<sequence length="262" mass="28276">MFINLNPLEQFSVYSATSAILGSSSNSLAITSLTNIAILFIIGLLVLTIFQISASSHLIKPTRWNIVLETWVASILGIVKDQIGNDAKNSLIYFPLIFTFFSFVFISNILGMIPYSFTPTSHISVTLGLSIAIMIGVTLIGFSKHQLDFFSLFVPKGTPLALVPLLVLIEFISYSARAFSLALRLTANVSAGHCLFGVISMLSVSACMAVSSILLKGITIGLPLAVLVVLYGLELLVALLQSYVFTLLTCSYLADIVNMGDH</sequence>
<proteinExistence type="inferred from homology"/>
<geneLocation type="mitochondrion"/>
<keyword id="KW-0066">ATP synthesis</keyword>
<keyword id="KW-0138">CF(0)</keyword>
<keyword id="KW-0375">Hydrogen ion transport</keyword>
<keyword id="KW-0406">Ion transport</keyword>
<keyword id="KW-0472">Membrane</keyword>
<keyword id="KW-0496">Mitochondrion</keyword>
<keyword id="KW-0999">Mitochondrion inner membrane</keyword>
<keyword id="KW-0812">Transmembrane</keyword>
<keyword id="KW-1133">Transmembrane helix</keyword>
<keyword id="KW-0813">Transport</keyword>
<dbReference type="EMBL" id="U02038">
    <property type="protein sequence ID" value="AAA64931.1"/>
    <property type="molecule type" value="Genomic_DNA"/>
</dbReference>
<dbReference type="EMBL" id="AF281324">
    <property type="protein sequence ID" value="AAF99320.1"/>
    <property type="molecule type" value="Genomic_DNA"/>
</dbReference>
<dbReference type="SMR" id="P50363"/>
<dbReference type="GO" id="GO:0005743">
    <property type="term" value="C:mitochondrial inner membrane"/>
    <property type="evidence" value="ECO:0007669"/>
    <property type="project" value="UniProtKB-SubCell"/>
</dbReference>
<dbReference type="GO" id="GO:0045259">
    <property type="term" value="C:proton-transporting ATP synthase complex"/>
    <property type="evidence" value="ECO:0007669"/>
    <property type="project" value="UniProtKB-KW"/>
</dbReference>
<dbReference type="GO" id="GO:0046933">
    <property type="term" value="F:proton-transporting ATP synthase activity, rotational mechanism"/>
    <property type="evidence" value="ECO:0007669"/>
    <property type="project" value="TreeGrafter"/>
</dbReference>
<dbReference type="CDD" id="cd00310">
    <property type="entry name" value="ATP-synt_Fo_a_6"/>
    <property type="match status" value="1"/>
</dbReference>
<dbReference type="FunFam" id="1.20.120.220:FF:000003">
    <property type="entry name" value="ATP synthase subunit a"/>
    <property type="match status" value="1"/>
</dbReference>
<dbReference type="Gene3D" id="1.20.120.220">
    <property type="entry name" value="ATP synthase, F0 complex, subunit A"/>
    <property type="match status" value="1"/>
</dbReference>
<dbReference type="HAMAP" id="MF_01393">
    <property type="entry name" value="ATP_synth_a_bact"/>
    <property type="match status" value="1"/>
</dbReference>
<dbReference type="InterPro" id="IPR000568">
    <property type="entry name" value="ATP_synth_F0_asu"/>
</dbReference>
<dbReference type="InterPro" id="IPR023011">
    <property type="entry name" value="ATP_synth_F0_asu_AS"/>
</dbReference>
<dbReference type="InterPro" id="IPR045083">
    <property type="entry name" value="ATP_synth_F0_asu_bact/mt"/>
</dbReference>
<dbReference type="InterPro" id="IPR035908">
    <property type="entry name" value="F0_ATP_A_sf"/>
</dbReference>
<dbReference type="NCBIfam" id="TIGR01131">
    <property type="entry name" value="ATP_synt_6_or_A"/>
    <property type="match status" value="1"/>
</dbReference>
<dbReference type="PANTHER" id="PTHR11410">
    <property type="entry name" value="ATP SYNTHASE SUBUNIT A"/>
    <property type="match status" value="1"/>
</dbReference>
<dbReference type="PANTHER" id="PTHR11410:SF0">
    <property type="entry name" value="ATP SYNTHASE SUBUNIT A"/>
    <property type="match status" value="1"/>
</dbReference>
<dbReference type="Pfam" id="PF00119">
    <property type="entry name" value="ATP-synt_A"/>
    <property type="match status" value="1"/>
</dbReference>
<dbReference type="PRINTS" id="PR00123">
    <property type="entry name" value="ATPASEA"/>
</dbReference>
<dbReference type="SUPFAM" id="SSF81336">
    <property type="entry name" value="F1F0 ATP synthase subunit A"/>
    <property type="match status" value="1"/>
</dbReference>
<dbReference type="PROSITE" id="PS00449">
    <property type="entry name" value="ATPASE_A"/>
    <property type="match status" value="1"/>
</dbReference>
<accession>P50363</accession>
<accession>Q7IKZ8</accession>
<organism>
    <name type="scientific">Allomyces arbusculus</name>
    <name type="common">Aquatic fungus</name>
    <dbReference type="NCBI Taxonomy" id="64504"/>
    <lineage>
        <taxon>Eukaryota</taxon>
        <taxon>Fungi</taxon>
        <taxon>Fungi incertae sedis</taxon>
        <taxon>Blastocladiomycota</taxon>
        <taxon>Blastocladiomycetes</taxon>
        <taxon>Blastocladiales</taxon>
        <taxon>Blastocladiaceae</taxon>
        <taxon>Allomyces</taxon>
    </lineage>
</organism>
<reference key="1">
    <citation type="journal article" date="1994" name="Proc. Natl. Acad. Sci. U.S.A.">
        <title>Interspecific transfer of mitochondrial genes in fungi and creation of a homologous hybrid gene.</title>
        <authorList>
            <person name="Paquin B."/>
            <person name="Laforest M.-J."/>
            <person name="Lang B.F."/>
        </authorList>
    </citation>
    <scope>NUCLEOTIDE SEQUENCE [GENOMIC DNA]</scope>
    <source>
        <strain>ATCC 10983</strain>
    </source>
</reference>
<reference key="2">
    <citation type="journal article" date="2000" name="Mol. Biol. Evol.">
        <title>Double-hairpin elements in the mitochondria DNA of Allomyces: Evidence for mobility.</title>
        <authorList>
            <person name="Paquin B."/>
            <person name="Laforest M.-J."/>
            <person name="Lang B.F."/>
        </authorList>
    </citation>
    <scope>NUCLEOTIDE SEQUENCE [GENOMIC DNA]</scope>
</reference>
<feature type="chain" id="PRO_0000082081" description="ATP synthase subunit a">
    <location>
        <begin position="1"/>
        <end position="262"/>
    </location>
</feature>
<feature type="transmembrane region" description="Helical" evidence="1">
    <location>
        <begin position="30"/>
        <end position="50"/>
    </location>
</feature>
<feature type="transmembrane region" description="Helical" evidence="1">
    <location>
        <begin position="64"/>
        <end position="84"/>
    </location>
</feature>
<feature type="transmembrane region" description="Helical" evidence="1">
    <location>
        <begin position="91"/>
        <end position="111"/>
    </location>
</feature>
<feature type="transmembrane region" description="Helical" evidence="1">
    <location>
        <begin position="123"/>
        <end position="143"/>
    </location>
</feature>
<feature type="transmembrane region" description="Helical" evidence="1">
    <location>
        <begin position="149"/>
        <end position="169"/>
    </location>
</feature>
<feature type="transmembrane region" description="Helical" evidence="1">
    <location>
        <begin position="195"/>
        <end position="215"/>
    </location>
</feature>
<feature type="transmembrane region" description="Helical" evidence="1">
    <location>
        <begin position="220"/>
        <end position="240"/>
    </location>
</feature>
<gene>
    <name type="primary">ATP6</name>
</gene>